<dbReference type="EC" id="7.1.1.-"/>
<dbReference type="EMBL" id="CP000489">
    <property type="protein sequence ID" value="ABL70326.1"/>
    <property type="molecule type" value="Genomic_DNA"/>
</dbReference>
<dbReference type="RefSeq" id="WP_010392916.1">
    <property type="nucleotide sequence ID" value="NC_008686.1"/>
</dbReference>
<dbReference type="PDB" id="8QBY">
    <property type="method" value="EM"/>
    <property type="resolution" value="2.30 A"/>
    <property type="chains" value="K=1-101"/>
</dbReference>
<dbReference type="PDBsum" id="8QBY"/>
<dbReference type="EMDB" id="EMD-18324"/>
<dbReference type="SMR" id="A1B482"/>
<dbReference type="STRING" id="318586.Pden_2234"/>
<dbReference type="EnsemblBacteria" id="ABL70326">
    <property type="protein sequence ID" value="ABL70326"/>
    <property type="gene ID" value="Pden_2234"/>
</dbReference>
<dbReference type="GeneID" id="93450632"/>
<dbReference type="KEGG" id="pde:Pden_2234"/>
<dbReference type="eggNOG" id="COG0713">
    <property type="taxonomic scope" value="Bacteria"/>
</dbReference>
<dbReference type="HOGENOM" id="CLU_144724_2_0_5"/>
<dbReference type="OrthoDB" id="9811124at2"/>
<dbReference type="Proteomes" id="UP000000361">
    <property type="component" value="Chromosome 1"/>
</dbReference>
<dbReference type="GO" id="GO:0030964">
    <property type="term" value="C:NADH dehydrogenase complex"/>
    <property type="evidence" value="ECO:0007669"/>
    <property type="project" value="TreeGrafter"/>
</dbReference>
<dbReference type="GO" id="GO:0005886">
    <property type="term" value="C:plasma membrane"/>
    <property type="evidence" value="ECO:0007669"/>
    <property type="project" value="UniProtKB-SubCell"/>
</dbReference>
<dbReference type="GO" id="GO:0050136">
    <property type="term" value="F:NADH:ubiquinone reductase (non-electrogenic) activity"/>
    <property type="evidence" value="ECO:0007669"/>
    <property type="project" value="UniProtKB-UniRule"/>
</dbReference>
<dbReference type="GO" id="GO:0048038">
    <property type="term" value="F:quinone binding"/>
    <property type="evidence" value="ECO:0007669"/>
    <property type="project" value="UniProtKB-KW"/>
</dbReference>
<dbReference type="GO" id="GO:0042773">
    <property type="term" value="P:ATP synthesis coupled electron transport"/>
    <property type="evidence" value="ECO:0007669"/>
    <property type="project" value="InterPro"/>
</dbReference>
<dbReference type="FunFam" id="1.10.287.3510:FF:000001">
    <property type="entry name" value="NADH-quinone oxidoreductase subunit K"/>
    <property type="match status" value="1"/>
</dbReference>
<dbReference type="Gene3D" id="1.10.287.3510">
    <property type="match status" value="1"/>
</dbReference>
<dbReference type="HAMAP" id="MF_01456">
    <property type="entry name" value="NDH1_NuoK"/>
    <property type="match status" value="1"/>
</dbReference>
<dbReference type="InterPro" id="IPR001133">
    <property type="entry name" value="NADH_UbQ_OxRdtase_chain4L/K"/>
</dbReference>
<dbReference type="InterPro" id="IPR039428">
    <property type="entry name" value="NUOK/Mnh_C1-like"/>
</dbReference>
<dbReference type="NCBIfam" id="NF004320">
    <property type="entry name" value="PRK05715.1-2"/>
    <property type="match status" value="1"/>
</dbReference>
<dbReference type="NCBIfam" id="NF004321">
    <property type="entry name" value="PRK05715.1-3"/>
    <property type="match status" value="1"/>
</dbReference>
<dbReference type="NCBIfam" id="NF004323">
    <property type="entry name" value="PRK05715.1-5"/>
    <property type="match status" value="1"/>
</dbReference>
<dbReference type="PANTHER" id="PTHR11434:SF21">
    <property type="entry name" value="NADH DEHYDROGENASE SUBUNIT 4L-RELATED"/>
    <property type="match status" value="1"/>
</dbReference>
<dbReference type="PANTHER" id="PTHR11434">
    <property type="entry name" value="NADH-UBIQUINONE OXIDOREDUCTASE SUBUNIT ND4L"/>
    <property type="match status" value="1"/>
</dbReference>
<dbReference type="Pfam" id="PF00420">
    <property type="entry name" value="Oxidored_q2"/>
    <property type="match status" value="1"/>
</dbReference>
<sequence>MIGLTHYLVVGAILFVTGIFGIFVNRKNVIVILMSIELMLLAVNINFVAFSTHLGDLAGQVFTMFVLTVAAAEAAIGLAILVVFFRNRGTIAVEDVNVMKG</sequence>
<reference key="1">
    <citation type="submission" date="2006-12" db="EMBL/GenBank/DDBJ databases">
        <title>Complete sequence of chromosome 1 of Paracoccus denitrificans PD1222.</title>
        <authorList>
            <person name="Copeland A."/>
            <person name="Lucas S."/>
            <person name="Lapidus A."/>
            <person name="Barry K."/>
            <person name="Detter J.C."/>
            <person name="Glavina del Rio T."/>
            <person name="Hammon N."/>
            <person name="Israni S."/>
            <person name="Dalin E."/>
            <person name="Tice H."/>
            <person name="Pitluck S."/>
            <person name="Munk A.C."/>
            <person name="Brettin T."/>
            <person name="Bruce D."/>
            <person name="Han C."/>
            <person name="Tapia R."/>
            <person name="Gilna P."/>
            <person name="Schmutz J."/>
            <person name="Larimer F."/>
            <person name="Land M."/>
            <person name="Hauser L."/>
            <person name="Kyrpides N."/>
            <person name="Lykidis A."/>
            <person name="Spiro S."/>
            <person name="Richardson D.J."/>
            <person name="Moir J.W.B."/>
            <person name="Ferguson S.J."/>
            <person name="van Spanning R.J.M."/>
            <person name="Richardson P."/>
        </authorList>
    </citation>
    <scope>NUCLEOTIDE SEQUENCE [LARGE SCALE GENOMIC DNA]</scope>
    <source>
        <strain>Pd 1222</strain>
    </source>
</reference>
<reference key="2">
    <citation type="journal article" date="2004" name="J. Biol. Chem.">
        <title>Assembly of respiratory complexes I, III, and IV into NADH oxidase supercomplex stabilizes complex I in Paracoccus denitrificans.</title>
        <authorList>
            <person name="Stroh A."/>
            <person name="Anderka O."/>
            <person name="Pfeiffer K."/>
            <person name="Yagi T."/>
            <person name="Finel M."/>
            <person name="Ludwig B."/>
            <person name="Schagger H."/>
        </authorList>
    </citation>
    <scope>IDENTIFICATION IN NADH OXIDASE SUPERCOMPLEX</scope>
    <scope>FUNCTION</scope>
    <scope>SUBUNIT</scope>
    <scope>SUBCELLULAR LOCATION</scope>
</reference>
<comment type="function">
    <text evidence="6">NDH-1 shuttles electrons from NADH, via FMN and iron-sulfur (Fe-S) centers, to quinones in the respiratory chain. The immediate electron acceptor for the enzyme in this species is believed to be ubiquinone. Couples the redox reaction to proton translocation (for every two electrons transferred, four hydrogen ions are translocated across the cytoplasmic membrane), and thus conserves the redox energy in a proton gradient.</text>
</comment>
<comment type="catalytic activity">
    <reaction>
        <text>a quinone + NADH + 5 H(+)(in) = a quinol + NAD(+) + 4 H(+)(out)</text>
        <dbReference type="Rhea" id="RHEA:57888"/>
        <dbReference type="ChEBI" id="CHEBI:15378"/>
        <dbReference type="ChEBI" id="CHEBI:24646"/>
        <dbReference type="ChEBI" id="CHEBI:57540"/>
        <dbReference type="ChEBI" id="CHEBI:57945"/>
        <dbReference type="ChEBI" id="CHEBI:132124"/>
    </reaction>
</comment>
<comment type="subunit">
    <text evidence="1 3">NDH-1 is composed of at least 14 different subunits, Nqo1 to Nqo14. The complex has a L-shaped structure, with the hydrophobic arm (subunits Nqo7, Nqo8, Nqo10 to Nqo14) embedded in the inner membrane and the hydrophilic peripheral arm (subunits Nqo1 to Nqo6, Nqo9) protruding into the bacterial cytoplasm. The hydrophilic domain contains all the redox centers (By similarity). NADH-quinone oxidoreductase forms a supercomplex with ubiquinol-cytochrome c reductase complex (complex III or cytochrome b-c1 complex) and cytochrome c oxidase (complex IV), which stabilizes the NADH-quinone oxidoreductase complex (PubMed:14610094).</text>
</comment>
<comment type="subcellular location">
    <subcellularLocation>
        <location evidence="6">Cell inner membrane</location>
        <topology evidence="6">Multi-pass membrane protein</topology>
    </subcellularLocation>
</comment>
<comment type="similarity">
    <text evidence="5">Belongs to the complex I subunit 4L family.</text>
</comment>
<accession>A1B482</accession>
<gene>
    <name type="primary">nuoK</name>
    <name evidence="4" type="synonym">nqo11</name>
    <name type="ordered locus">Pden_2234</name>
</gene>
<name>NUOK_PARDP</name>
<keyword id="KW-0002">3D-structure</keyword>
<keyword id="KW-0997">Cell inner membrane</keyword>
<keyword id="KW-1003">Cell membrane</keyword>
<keyword id="KW-0472">Membrane</keyword>
<keyword id="KW-0520">NAD</keyword>
<keyword id="KW-0874">Quinone</keyword>
<keyword id="KW-1185">Reference proteome</keyword>
<keyword id="KW-1278">Translocase</keyword>
<keyword id="KW-0812">Transmembrane</keyword>
<keyword id="KW-1133">Transmembrane helix</keyword>
<keyword id="KW-0813">Transport</keyword>
<keyword id="KW-0830">Ubiquinone</keyword>
<feature type="chain" id="PRO_0000390153" description="NADH-quinone oxidoreductase subunit K">
    <location>
        <begin position="1"/>
        <end position="101"/>
    </location>
</feature>
<feature type="transmembrane region" description="Helical" evidence="2">
    <location>
        <begin position="4"/>
        <end position="24"/>
    </location>
</feature>
<feature type="transmembrane region" description="Helical" evidence="2">
    <location>
        <begin position="30"/>
        <end position="50"/>
    </location>
</feature>
<feature type="transmembrane region" description="Helical" evidence="2">
    <location>
        <begin position="65"/>
        <end position="85"/>
    </location>
</feature>
<feature type="helix" evidence="7">
    <location>
        <begin position="4"/>
        <end position="24"/>
    </location>
</feature>
<feature type="helix" evidence="7">
    <location>
        <begin position="29"/>
        <end position="54"/>
    </location>
</feature>
<feature type="helix" evidence="7">
    <location>
        <begin position="58"/>
        <end position="88"/>
    </location>
</feature>
<feature type="helix" evidence="7">
    <location>
        <begin position="93"/>
        <end position="95"/>
    </location>
</feature>
<proteinExistence type="evidence at protein level"/>
<evidence type="ECO:0000250" key="1"/>
<evidence type="ECO:0000255" key="2"/>
<evidence type="ECO:0000269" key="3">
    <source>
    </source>
</evidence>
<evidence type="ECO:0000303" key="4">
    <source>
    </source>
</evidence>
<evidence type="ECO:0000305" key="5"/>
<evidence type="ECO:0000305" key="6">
    <source>
    </source>
</evidence>
<evidence type="ECO:0007829" key="7">
    <source>
        <dbReference type="PDB" id="8QBY"/>
    </source>
</evidence>
<protein>
    <recommendedName>
        <fullName>NADH-quinone oxidoreductase subunit K</fullName>
        <ecNumber>7.1.1.-</ecNumber>
    </recommendedName>
    <alternativeName>
        <fullName>NADH dehydrogenase I subunit K</fullName>
    </alternativeName>
    <alternativeName>
        <fullName>NADH dehydrogenase I, subunit 11</fullName>
    </alternativeName>
    <alternativeName>
        <fullName>NADH-quinone oxidoreductase subunit 11</fullName>
        <shortName>NQO11</shortName>
    </alternativeName>
    <alternativeName>
        <fullName>NDH-1 subunit K</fullName>
    </alternativeName>
    <alternativeName>
        <fullName>NDH-1, subunit 11</fullName>
    </alternativeName>
</protein>
<organism>
    <name type="scientific">Paracoccus denitrificans (strain Pd 1222)</name>
    <dbReference type="NCBI Taxonomy" id="318586"/>
    <lineage>
        <taxon>Bacteria</taxon>
        <taxon>Pseudomonadati</taxon>
        <taxon>Pseudomonadota</taxon>
        <taxon>Alphaproteobacteria</taxon>
        <taxon>Rhodobacterales</taxon>
        <taxon>Paracoccaceae</taxon>
        <taxon>Paracoccus</taxon>
    </lineage>
</organism>